<feature type="chain" id="PRO_0000402516" description="RNA-binding P34 protein">
    <location>
        <begin position="1"/>
        <end position="292"/>
    </location>
</feature>
<feature type="transmembrane region" description="Helical" evidence="1">
    <location>
        <begin position="29"/>
        <end position="46"/>
    </location>
</feature>
<feature type="region of interest" description="RNA-binding">
    <location>
        <begin position="219"/>
        <end position="292"/>
    </location>
</feature>
<organism>
    <name type="scientific">Lettuce infectious yellows virus (isolate United States/92)</name>
    <name type="common">LIYV</name>
    <dbReference type="NCBI Taxonomy" id="651355"/>
    <lineage>
        <taxon>Viruses</taxon>
        <taxon>Riboviria</taxon>
        <taxon>Orthornavirae</taxon>
        <taxon>Kitrinoviricota</taxon>
        <taxon>Alsuviricetes</taxon>
        <taxon>Martellivirales</taxon>
        <taxon>Closteroviridae</taxon>
        <taxon>Crinivirus</taxon>
        <taxon>Lettuce infectious yellows virus</taxon>
    </lineage>
</organism>
<dbReference type="EMBL" id="U15440">
    <property type="protein sequence ID" value="AAA61799.1"/>
    <property type="status" value="ALT_SEQ"/>
    <property type="molecule type" value="Genomic_RNA"/>
</dbReference>
<dbReference type="SMR" id="Q83046"/>
<dbReference type="KEGG" id="vg:991074"/>
<dbReference type="Proteomes" id="UP000001099">
    <property type="component" value="Genome"/>
</dbReference>
<dbReference type="GO" id="GO:0044167">
    <property type="term" value="C:host cell endoplasmic reticulum membrane"/>
    <property type="evidence" value="ECO:0007669"/>
    <property type="project" value="UniProtKB-SubCell"/>
</dbReference>
<dbReference type="GO" id="GO:0016020">
    <property type="term" value="C:membrane"/>
    <property type="evidence" value="ECO:0007669"/>
    <property type="project" value="UniProtKB-KW"/>
</dbReference>
<dbReference type="GO" id="GO:0003723">
    <property type="term" value="F:RNA binding"/>
    <property type="evidence" value="ECO:0007669"/>
    <property type="project" value="UniProtKB-KW"/>
</dbReference>
<evidence type="ECO:0000255" key="1"/>
<evidence type="ECO:0000269" key="2">
    <source>
    </source>
</evidence>
<evidence type="ECO:0000305" key="3"/>
<sequence>MIMMSPLYALTKQCVIDTAYRLAVPTQHCAIYTVACRILFLSVGFMTIVKLCGFKMDTSSFIASIEKDNLMDCLISLVEMRDRLRLCNDFPILNYGVNILELLIGKRLNKINNLKNCYVIRELITINISKEWVGKQALKVGLHCFLNLSQADSRHVKYLLSDKESLNKMNFSRYYVPKVVTDLYLDLIGVLYVNTGYNIDLVEKFIFDKLEFLVYDGEEGFKSPQVEYNDICTVNNLKPIIKYNRWHTDGSIVIECGDVIGKGINKTKKKFAINDAKAEFVKNFKAKNKNNE</sequence>
<organismHost>
    <name type="scientific">Beta vulgaris</name>
    <name type="common">Sugar beet</name>
    <dbReference type="NCBI Taxonomy" id="161934"/>
</organismHost>
<organismHost>
    <name type="scientific">Citrullus lanatus</name>
    <name type="common">Watermelon</name>
    <name type="synonym">Citrullus vulgaris</name>
    <dbReference type="NCBI Taxonomy" id="3654"/>
</organismHost>
<organismHost>
    <name type="scientific">Cucumis melo</name>
    <name type="common">Muskmelon</name>
    <dbReference type="NCBI Taxonomy" id="3656"/>
</organismHost>
<organismHost>
    <name type="scientific">Cucurbita maxima</name>
    <name type="common">Pumpkin</name>
    <name type="synonym">Winter squash</name>
    <dbReference type="NCBI Taxonomy" id="3661"/>
</organismHost>
<organismHost>
    <name type="scientific">Cucurbita moschata</name>
    <name type="common">Winter crookneck squash</name>
    <name type="synonym">Cucurbita pepo var. moschata</name>
    <dbReference type="NCBI Taxonomy" id="3662"/>
</organismHost>
<organismHost>
    <name type="scientific">Cucurbita pepo</name>
    <name type="common">Vegetable marrow</name>
    <name type="synonym">Summer squash</name>
    <dbReference type="NCBI Taxonomy" id="3663"/>
</organismHost>
<organismHost>
    <name type="scientific">Daucus carota</name>
    <name type="common">Wild carrot</name>
    <dbReference type="NCBI Taxonomy" id="4039"/>
</organismHost>
<organismHost>
    <name type="scientific">Lactuca sativa</name>
    <name type="common">Garden lettuce</name>
    <dbReference type="NCBI Taxonomy" id="4236"/>
</organismHost>
<name>P34_LIYV9</name>
<keyword id="KW-1038">Host endoplasmic reticulum</keyword>
<keyword id="KW-1043">Host membrane</keyword>
<keyword id="KW-0472">Membrane</keyword>
<keyword id="KW-1185">Reference proteome</keyword>
<keyword id="KW-0694">RNA-binding</keyword>
<keyword id="KW-0812">Transmembrane</keyword>
<keyword id="KW-1133">Transmembrane helix</keyword>
<protein>
    <recommendedName>
        <fullName>RNA-binding P34 protein</fullName>
        <shortName>P34</shortName>
    </recommendedName>
</protein>
<proteinExistence type="evidence at protein level"/>
<accession>Q83046</accession>
<reference key="1">
    <citation type="journal article" date="1995" name="Virology">
        <title>Genome structure and phylogenetic analysis of lettuce infectious yellows virus, a whitefly-transmitted, bipartite closterovirus.</title>
        <authorList>
            <person name="Klaassen V.A."/>
            <person name="Boeshore M.L."/>
            <person name="Koonin E.V."/>
            <person name="Tian T."/>
            <person name="Falk B.W."/>
        </authorList>
    </citation>
    <scope>NUCLEOTIDE SEQUENCE [GENOMIC RNA]</scope>
</reference>
<reference key="2">
    <citation type="journal article" date="2010" name="Virology">
        <title>Lettuce infectious yellows virus (LIYV) RNA 1-encoded P34 is an RNA-binding protein and exhibits perinuclear localization.</title>
        <authorList>
            <person name="Wang J."/>
            <person name="Stewart L.R."/>
            <person name="Kiss Z."/>
            <person name="Falk B.W."/>
        </authorList>
    </citation>
    <scope>RNA-BINDING FUNCTION</scope>
    <scope>SUBCELLULAR LOCATION</scope>
</reference>
<comment type="function">
    <text>Acts as a ssRNA-binding protein that may be involved in targeting RNA2 to replication sites or facilitating RNA2 replication.</text>
</comment>
<comment type="subcellular location">
    <subcellularLocation>
        <location evidence="3">Host endoplasmic reticulum membrane</location>
        <topology evidence="3">Single-pass membrane protein</topology>
    </subcellularLocation>
    <text evidence="2">Probably localizes to virally-induced ER rearrangement structures.</text>
</comment>
<comment type="sequence caution" evidence="3">
    <conflict type="erroneous gene model prediction">
        <sequence resource="EMBL-CDS" id="AAA61799"/>
    </conflict>
</comment>